<keyword id="KW-0004">4Fe-4S</keyword>
<keyword id="KW-0963">Cytoplasm</keyword>
<keyword id="KW-1015">Disulfide bond</keyword>
<keyword id="KW-0408">Iron</keyword>
<keyword id="KW-0411">Iron-sulfur</keyword>
<keyword id="KW-0479">Metal-binding</keyword>
<keyword id="KW-0489">Methyltransferase</keyword>
<keyword id="KW-1185">Reference proteome</keyword>
<keyword id="KW-0698">rRNA processing</keyword>
<keyword id="KW-0949">S-adenosyl-L-methionine</keyword>
<keyword id="KW-0808">Transferase</keyword>
<keyword id="KW-0819">tRNA processing</keyword>
<dbReference type="EC" id="2.1.1.192" evidence="1"/>
<dbReference type="EMBL" id="CP000812">
    <property type="protein sequence ID" value="ABV34406.1"/>
    <property type="molecule type" value="Genomic_DNA"/>
</dbReference>
<dbReference type="SMR" id="A8F8C2"/>
<dbReference type="STRING" id="416591.Tlet_1852"/>
<dbReference type="KEGG" id="tle:Tlet_1852"/>
<dbReference type="eggNOG" id="COG0820">
    <property type="taxonomic scope" value="Bacteria"/>
</dbReference>
<dbReference type="HOGENOM" id="CLU_029101_2_0_0"/>
<dbReference type="OrthoDB" id="9793973at2"/>
<dbReference type="Proteomes" id="UP000002016">
    <property type="component" value="Chromosome"/>
</dbReference>
<dbReference type="GO" id="GO:0005737">
    <property type="term" value="C:cytoplasm"/>
    <property type="evidence" value="ECO:0007669"/>
    <property type="project" value="UniProtKB-SubCell"/>
</dbReference>
<dbReference type="GO" id="GO:0051539">
    <property type="term" value="F:4 iron, 4 sulfur cluster binding"/>
    <property type="evidence" value="ECO:0007669"/>
    <property type="project" value="UniProtKB-UniRule"/>
</dbReference>
<dbReference type="GO" id="GO:0046872">
    <property type="term" value="F:metal ion binding"/>
    <property type="evidence" value="ECO:0007669"/>
    <property type="project" value="UniProtKB-KW"/>
</dbReference>
<dbReference type="GO" id="GO:0070040">
    <property type="term" value="F:rRNA (adenine(2503)-C2-)-methyltransferase activity"/>
    <property type="evidence" value="ECO:0007669"/>
    <property type="project" value="UniProtKB-UniRule"/>
</dbReference>
<dbReference type="GO" id="GO:0019843">
    <property type="term" value="F:rRNA binding"/>
    <property type="evidence" value="ECO:0007669"/>
    <property type="project" value="UniProtKB-UniRule"/>
</dbReference>
<dbReference type="GO" id="GO:0002935">
    <property type="term" value="F:tRNA (adenine(37)-C2)-methyltransferase activity"/>
    <property type="evidence" value="ECO:0007669"/>
    <property type="project" value="UniProtKB-UniRule"/>
</dbReference>
<dbReference type="GO" id="GO:0000049">
    <property type="term" value="F:tRNA binding"/>
    <property type="evidence" value="ECO:0007669"/>
    <property type="project" value="UniProtKB-UniRule"/>
</dbReference>
<dbReference type="GO" id="GO:0070475">
    <property type="term" value="P:rRNA base methylation"/>
    <property type="evidence" value="ECO:0007669"/>
    <property type="project" value="UniProtKB-UniRule"/>
</dbReference>
<dbReference type="GO" id="GO:0030488">
    <property type="term" value="P:tRNA methylation"/>
    <property type="evidence" value="ECO:0007669"/>
    <property type="project" value="UniProtKB-UniRule"/>
</dbReference>
<dbReference type="CDD" id="cd01335">
    <property type="entry name" value="Radical_SAM"/>
    <property type="match status" value="1"/>
</dbReference>
<dbReference type="FunFam" id="3.20.20.70:FF:000014">
    <property type="entry name" value="Probable dual-specificity RNA methyltransferase RlmN"/>
    <property type="match status" value="1"/>
</dbReference>
<dbReference type="Gene3D" id="1.10.150.530">
    <property type="match status" value="1"/>
</dbReference>
<dbReference type="Gene3D" id="3.20.20.70">
    <property type="entry name" value="Aldolase class I"/>
    <property type="match status" value="1"/>
</dbReference>
<dbReference type="HAMAP" id="MF_01849">
    <property type="entry name" value="RNA_methyltr_RlmN"/>
    <property type="match status" value="1"/>
</dbReference>
<dbReference type="InterPro" id="IPR013785">
    <property type="entry name" value="Aldolase_TIM"/>
</dbReference>
<dbReference type="InterPro" id="IPR006638">
    <property type="entry name" value="Elp3/MiaA/NifB-like_rSAM"/>
</dbReference>
<dbReference type="InterPro" id="IPR040072">
    <property type="entry name" value="Methyltransferase_A"/>
</dbReference>
<dbReference type="InterPro" id="IPR048641">
    <property type="entry name" value="RlmN_N"/>
</dbReference>
<dbReference type="InterPro" id="IPR027492">
    <property type="entry name" value="RNA_MTrfase_RlmN"/>
</dbReference>
<dbReference type="InterPro" id="IPR004383">
    <property type="entry name" value="rRNA_lsu_MTrfase_RlmN/Cfr"/>
</dbReference>
<dbReference type="InterPro" id="IPR007197">
    <property type="entry name" value="rSAM"/>
</dbReference>
<dbReference type="NCBIfam" id="TIGR00048">
    <property type="entry name" value="rRNA_mod_RlmN"/>
    <property type="match status" value="1"/>
</dbReference>
<dbReference type="PANTHER" id="PTHR30544">
    <property type="entry name" value="23S RRNA METHYLTRANSFERASE"/>
    <property type="match status" value="1"/>
</dbReference>
<dbReference type="PANTHER" id="PTHR30544:SF5">
    <property type="entry name" value="RADICAL SAM CORE DOMAIN-CONTAINING PROTEIN"/>
    <property type="match status" value="1"/>
</dbReference>
<dbReference type="Pfam" id="PF04055">
    <property type="entry name" value="Radical_SAM"/>
    <property type="match status" value="1"/>
</dbReference>
<dbReference type="Pfam" id="PF21016">
    <property type="entry name" value="RlmN_N"/>
    <property type="match status" value="1"/>
</dbReference>
<dbReference type="PIRSF" id="PIRSF006004">
    <property type="entry name" value="CHP00048"/>
    <property type="match status" value="1"/>
</dbReference>
<dbReference type="SFLD" id="SFLDF00275">
    <property type="entry name" value="adenosine_C2_methyltransferase"/>
    <property type="match status" value="1"/>
</dbReference>
<dbReference type="SFLD" id="SFLDG01062">
    <property type="entry name" value="methyltransferase_(Class_A)"/>
    <property type="match status" value="1"/>
</dbReference>
<dbReference type="SMART" id="SM00729">
    <property type="entry name" value="Elp3"/>
    <property type="match status" value="1"/>
</dbReference>
<dbReference type="SUPFAM" id="SSF102114">
    <property type="entry name" value="Radical SAM enzymes"/>
    <property type="match status" value="1"/>
</dbReference>
<dbReference type="PROSITE" id="PS51918">
    <property type="entry name" value="RADICAL_SAM"/>
    <property type="match status" value="1"/>
</dbReference>
<evidence type="ECO:0000255" key="1">
    <source>
        <dbReference type="HAMAP-Rule" id="MF_01849"/>
    </source>
</evidence>
<evidence type="ECO:0000255" key="2">
    <source>
        <dbReference type="PROSITE-ProRule" id="PRU01266"/>
    </source>
</evidence>
<comment type="function">
    <text evidence="1">Specifically methylates position 2 of adenine 2503 in 23S rRNA and position 2 of adenine 37 in tRNAs.</text>
</comment>
<comment type="catalytic activity">
    <reaction evidence="1">
        <text>adenosine(2503) in 23S rRNA + 2 reduced [2Fe-2S]-[ferredoxin] + 2 S-adenosyl-L-methionine = 2-methyladenosine(2503) in 23S rRNA + 5'-deoxyadenosine + L-methionine + 2 oxidized [2Fe-2S]-[ferredoxin] + S-adenosyl-L-homocysteine</text>
        <dbReference type="Rhea" id="RHEA:42916"/>
        <dbReference type="Rhea" id="RHEA-COMP:10000"/>
        <dbReference type="Rhea" id="RHEA-COMP:10001"/>
        <dbReference type="Rhea" id="RHEA-COMP:10152"/>
        <dbReference type="Rhea" id="RHEA-COMP:10282"/>
        <dbReference type="ChEBI" id="CHEBI:17319"/>
        <dbReference type="ChEBI" id="CHEBI:33737"/>
        <dbReference type="ChEBI" id="CHEBI:33738"/>
        <dbReference type="ChEBI" id="CHEBI:57844"/>
        <dbReference type="ChEBI" id="CHEBI:57856"/>
        <dbReference type="ChEBI" id="CHEBI:59789"/>
        <dbReference type="ChEBI" id="CHEBI:74411"/>
        <dbReference type="ChEBI" id="CHEBI:74497"/>
        <dbReference type="EC" id="2.1.1.192"/>
    </reaction>
</comment>
<comment type="catalytic activity">
    <reaction evidence="1">
        <text>adenosine(37) in tRNA + 2 reduced [2Fe-2S]-[ferredoxin] + 2 S-adenosyl-L-methionine = 2-methyladenosine(37) in tRNA + 5'-deoxyadenosine + L-methionine + 2 oxidized [2Fe-2S]-[ferredoxin] + S-adenosyl-L-homocysteine</text>
        <dbReference type="Rhea" id="RHEA:43332"/>
        <dbReference type="Rhea" id="RHEA-COMP:10000"/>
        <dbReference type="Rhea" id="RHEA-COMP:10001"/>
        <dbReference type="Rhea" id="RHEA-COMP:10162"/>
        <dbReference type="Rhea" id="RHEA-COMP:10485"/>
        <dbReference type="ChEBI" id="CHEBI:17319"/>
        <dbReference type="ChEBI" id="CHEBI:33737"/>
        <dbReference type="ChEBI" id="CHEBI:33738"/>
        <dbReference type="ChEBI" id="CHEBI:57844"/>
        <dbReference type="ChEBI" id="CHEBI:57856"/>
        <dbReference type="ChEBI" id="CHEBI:59789"/>
        <dbReference type="ChEBI" id="CHEBI:74411"/>
        <dbReference type="ChEBI" id="CHEBI:74497"/>
        <dbReference type="EC" id="2.1.1.192"/>
    </reaction>
</comment>
<comment type="cofactor">
    <cofactor evidence="1">
        <name>[4Fe-4S] cluster</name>
        <dbReference type="ChEBI" id="CHEBI:49883"/>
    </cofactor>
    <text evidence="1">Binds 1 [4Fe-4S] cluster. The cluster is coordinated with 3 cysteines and an exchangeable S-adenosyl-L-methionine.</text>
</comment>
<comment type="subcellular location">
    <subcellularLocation>
        <location evidence="1">Cytoplasm</location>
    </subcellularLocation>
</comment>
<comment type="miscellaneous">
    <text evidence="1">Reaction proceeds by a ping-pong mechanism involving intermediate methylation of a conserved cysteine residue.</text>
</comment>
<comment type="similarity">
    <text evidence="1">Belongs to the radical SAM superfamily. RlmN family.</text>
</comment>
<reference key="1">
    <citation type="submission" date="2007-08" db="EMBL/GenBank/DDBJ databases">
        <title>Complete sequence of Thermotoga lettingae TMO.</title>
        <authorList>
            <consortium name="US DOE Joint Genome Institute"/>
            <person name="Copeland A."/>
            <person name="Lucas S."/>
            <person name="Lapidus A."/>
            <person name="Barry K."/>
            <person name="Glavina del Rio T."/>
            <person name="Dalin E."/>
            <person name="Tice H."/>
            <person name="Pitluck S."/>
            <person name="Foster B."/>
            <person name="Bruce D."/>
            <person name="Schmutz J."/>
            <person name="Larimer F."/>
            <person name="Land M."/>
            <person name="Hauser L."/>
            <person name="Kyrpides N."/>
            <person name="Mikhailova N."/>
            <person name="Nelson K."/>
            <person name="Gogarten J.P."/>
            <person name="Noll K."/>
            <person name="Richardson P."/>
        </authorList>
    </citation>
    <scope>NUCLEOTIDE SEQUENCE [LARGE SCALE GENOMIC DNA]</scope>
    <source>
        <strain>ATCC BAA-301 / DSM 14385 / NBRC 107922 / TMO</strain>
    </source>
</reference>
<name>RLMN_PSELT</name>
<proteinExistence type="inferred from homology"/>
<feature type="chain" id="PRO_0000350499" description="Probable dual-specificity RNA methyltransferase RlmN">
    <location>
        <begin position="1"/>
        <end position="343"/>
    </location>
</feature>
<feature type="domain" description="Radical SAM core" evidence="2">
    <location>
        <begin position="96"/>
        <end position="325"/>
    </location>
</feature>
<feature type="active site" description="Proton acceptor" evidence="1">
    <location>
        <position position="90"/>
    </location>
</feature>
<feature type="active site" description="S-methylcysteine intermediate" evidence="1">
    <location>
        <position position="330"/>
    </location>
</feature>
<feature type="binding site" evidence="1">
    <location>
        <position position="110"/>
    </location>
    <ligand>
        <name>[4Fe-4S] cluster</name>
        <dbReference type="ChEBI" id="CHEBI:49883"/>
        <note>4Fe-4S-S-AdoMet</note>
    </ligand>
</feature>
<feature type="binding site" evidence="1">
    <location>
        <position position="114"/>
    </location>
    <ligand>
        <name>[4Fe-4S] cluster</name>
        <dbReference type="ChEBI" id="CHEBI:49883"/>
        <note>4Fe-4S-S-AdoMet</note>
    </ligand>
</feature>
<feature type="binding site" evidence="1">
    <location>
        <position position="117"/>
    </location>
    <ligand>
        <name>[4Fe-4S] cluster</name>
        <dbReference type="ChEBI" id="CHEBI:49883"/>
        <note>4Fe-4S-S-AdoMet</note>
    </ligand>
</feature>
<feature type="binding site" evidence="1">
    <location>
        <begin position="157"/>
        <end position="158"/>
    </location>
    <ligand>
        <name>S-adenosyl-L-methionine</name>
        <dbReference type="ChEBI" id="CHEBI:59789"/>
    </ligand>
</feature>
<feature type="binding site" evidence="1">
    <location>
        <position position="189"/>
    </location>
    <ligand>
        <name>S-adenosyl-L-methionine</name>
        <dbReference type="ChEBI" id="CHEBI:59789"/>
    </ligand>
</feature>
<feature type="binding site" evidence="1">
    <location>
        <begin position="212"/>
        <end position="214"/>
    </location>
    <ligand>
        <name>S-adenosyl-L-methionine</name>
        <dbReference type="ChEBI" id="CHEBI:59789"/>
    </ligand>
</feature>
<feature type="binding site" evidence="1">
    <location>
        <position position="288"/>
    </location>
    <ligand>
        <name>S-adenosyl-L-methionine</name>
        <dbReference type="ChEBI" id="CHEBI:59789"/>
    </ligand>
</feature>
<feature type="disulfide bond" description="(transient)" evidence="1">
    <location>
        <begin position="103"/>
        <end position="330"/>
    </location>
</feature>
<sequence length="343" mass="39437">MNILSMTYEKFVQKIQELGLEKYRADQILDWIYKKHVFVFEQMTNLSKQHRSLLRENFCIQIPKIVSKRVSSIDKTTKYLYELSDGNTIESVLLFHEGYATACISTQIGCPVKCSFCATGQSGFVRNLDAGEIVSQILAIEKDSKQTVRNIVYMGMGEPLLNYDNVIKSIKILIDKKTKNIGIRRVTLSTVGIPEMILKLSEERLDLNLAISLHASTNEKRDQIIPINRKYSIQEIINAAKNYQERSDRRLTIEYILIKEFNDFDEDARKLAKLLNGLKVFVNLIPVNSTFSNFEKPAKWKINRFKEILINSGIEAEIRYEKGADIEAACGQLRIRNLLSKQL</sequence>
<protein>
    <recommendedName>
        <fullName evidence="1">Probable dual-specificity RNA methyltransferase RlmN</fullName>
        <ecNumber evidence="1">2.1.1.192</ecNumber>
    </recommendedName>
    <alternativeName>
        <fullName evidence="1">23S rRNA (adenine(2503)-C(2))-methyltransferase</fullName>
    </alternativeName>
    <alternativeName>
        <fullName evidence="1">23S rRNA m2A2503 methyltransferase</fullName>
    </alternativeName>
    <alternativeName>
        <fullName evidence="1">Ribosomal RNA large subunit methyltransferase N</fullName>
    </alternativeName>
    <alternativeName>
        <fullName evidence="1">tRNA (adenine(37)-C(2))-methyltransferase</fullName>
    </alternativeName>
    <alternativeName>
        <fullName evidence="1">tRNA m2A37 methyltransferase</fullName>
    </alternativeName>
</protein>
<gene>
    <name evidence="1" type="primary">rlmN</name>
    <name type="ordered locus">Tlet_1852</name>
</gene>
<accession>A8F8C2</accession>
<organism>
    <name type="scientific">Pseudothermotoga lettingae (strain ATCC BAA-301 / DSM 14385 / NBRC 107922 / TMO)</name>
    <name type="common">Thermotoga lettingae</name>
    <dbReference type="NCBI Taxonomy" id="416591"/>
    <lineage>
        <taxon>Bacteria</taxon>
        <taxon>Thermotogati</taxon>
        <taxon>Thermotogota</taxon>
        <taxon>Thermotogae</taxon>
        <taxon>Thermotogales</taxon>
        <taxon>Thermotogaceae</taxon>
        <taxon>Pseudothermotoga</taxon>
    </lineage>
</organism>